<organism>
    <name type="scientific">Neurospora crassa (strain ATCC 24698 / 74-OR23-1A / CBS 708.71 / DSM 1257 / FGSC 987)</name>
    <dbReference type="NCBI Taxonomy" id="367110"/>
    <lineage>
        <taxon>Eukaryota</taxon>
        <taxon>Fungi</taxon>
        <taxon>Dikarya</taxon>
        <taxon>Ascomycota</taxon>
        <taxon>Pezizomycotina</taxon>
        <taxon>Sordariomycetes</taxon>
        <taxon>Sordariomycetidae</taxon>
        <taxon>Sordariales</taxon>
        <taxon>Sordariaceae</taxon>
        <taxon>Neurospora</taxon>
    </lineage>
</organism>
<proteinExistence type="evidence at protein level"/>
<reference key="1">
    <citation type="journal article" date="2003" name="Nature">
        <title>The genome sequence of the filamentous fungus Neurospora crassa.</title>
        <authorList>
            <person name="Galagan J.E."/>
            <person name="Calvo S.E."/>
            <person name="Borkovich K.A."/>
            <person name="Selker E.U."/>
            <person name="Read N.D."/>
            <person name="Jaffe D.B."/>
            <person name="FitzHugh W."/>
            <person name="Ma L.-J."/>
            <person name="Smirnov S."/>
            <person name="Purcell S."/>
            <person name="Rehman B."/>
            <person name="Elkins T."/>
            <person name="Engels R."/>
            <person name="Wang S."/>
            <person name="Nielsen C.B."/>
            <person name="Butler J."/>
            <person name="Endrizzi M."/>
            <person name="Qui D."/>
            <person name="Ianakiev P."/>
            <person name="Bell-Pedersen D."/>
            <person name="Nelson M.A."/>
            <person name="Werner-Washburne M."/>
            <person name="Selitrennikoff C.P."/>
            <person name="Kinsey J.A."/>
            <person name="Braun E.L."/>
            <person name="Zelter A."/>
            <person name="Schulte U."/>
            <person name="Kothe G.O."/>
            <person name="Jedd G."/>
            <person name="Mewes H.-W."/>
            <person name="Staben C."/>
            <person name="Marcotte E."/>
            <person name="Greenberg D."/>
            <person name="Roy A."/>
            <person name="Foley K."/>
            <person name="Naylor J."/>
            <person name="Stange-Thomann N."/>
            <person name="Barrett R."/>
            <person name="Gnerre S."/>
            <person name="Kamal M."/>
            <person name="Kamvysselis M."/>
            <person name="Mauceli E.W."/>
            <person name="Bielke C."/>
            <person name="Rudd S."/>
            <person name="Frishman D."/>
            <person name="Krystofova S."/>
            <person name="Rasmussen C."/>
            <person name="Metzenberg R.L."/>
            <person name="Perkins D.D."/>
            <person name="Kroken S."/>
            <person name="Cogoni C."/>
            <person name="Macino G."/>
            <person name="Catcheside D.E.A."/>
            <person name="Li W."/>
            <person name="Pratt R.J."/>
            <person name="Osmani S.A."/>
            <person name="DeSouza C.P.C."/>
            <person name="Glass N.L."/>
            <person name="Orbach M.J."/>
            <person name="Berglund J.A."/>
            <person name="Voelker R."/>
            <person name="Yarden O."/>
            <person name="Plamann M."/>
            <person name="Seiler S."/>
            <person name="Dunlap J.C."/>
            <person name="Radford A."/>
            <person name="Aramayo R."/>
            <person name="Natvig D.O."/>
            <person name="Alex L.A."/>
            <person name="Mannhaupt G."/>
            <person name="Ebbole D.J."/>
            <person name="Freitag M."/>
            <person name="Paulsen I."/>
            <person name="Sachs M.S."/>
            <person name="Lander E.S."/>
            <person name="Nusbaum C."/>
            <person name="Birren B.W."/>
        </authorList>
    </citation>
    <scope>NUCLEOTIDE SEQUENCE [LARGE SCALE GENOMIC DNA]</scope>
    <source>
        <strain>ATCC 24698 / 74-OR23-1A / CBS 708.71 / DSM 1257 / FGSC 987</strain>
    </source>
</reference>
<reference evidence="5 6" key="2">
    <citation type="journal article" date="2020" name="Nat. Commun.">
        <title>Analysis of translating mitoribosome reveals functional characteristics of translation in mitochondria of fungi.</title>
        <authorList>
            <person name="Itoh Y."/>
            <person name="Naschberger A."/>
            <person name="Mortezaei N."/>
            <person name="Herrmann J.M."/>
            <person name="Amunts A."/>
        </authorList>
    </citation>
    <scope>STRUCTURE BY ELECTRON MICROSCOPY (2.74 ANGSTROMS)</scope>
</reference>
<accession>F5HIJ5</accession>
<feature type="chain" id="PRO_0000458614" description="Large ribosomal subunit protein uL16m">
    <location>
        <begin position="1"/>
        <end position="249"/>
    </location>
</feature>
<keyword id="KW-0002">3D-structure</keyword>
<keyword id="KW-0496">Mitochondrion</keyword>
<keyword id="KW-1185">Reference proteome</keyword>
<keyword id="KW-0687">Ribonucleoprotein</keyword>
<keyword id="KW-0689">Ribosomal protein</keyword>
<dbReference type="EMBL" id="CM002237">
    <property type="protein sequence ID" value="EAA34304.2"/>
    <property type="molecule type" value="Genomic_DNA"/>
</dbReference>
<dbReference type="RefSeq" id="XP_963540.2">
    <property type="nucleotide sequence ID" value="XM_958447.3"/>
</dbReference>
<dbReference type="PDB" id="6YWS">
    <property type="method" value="EM"/>
    <property type="resolution" value="2.74 A"/>
    <property type="chains" value="K=1-249"/>
</dbReference>
<dbReference type="PDB" id="6YWV">
    <property type="method" value="EM"/>
    <property type="resolution" value="3.03 A"/>
    <property type="chains" value="K=1-249"/>
</dbReference>
<dbReference type="PDB" id="6YWX">
    <property type="method" value="EM"/>
    <property type="resolution" value="3.10 A"/>
    <property type="chains" value="K=1-249"/>
</dbReference>
<dbReference type="PDBsum" id="6YWS"/>
<dbReference type="PDBsum" id="6YWV"/>
<dbReference type="PDBsum" id="6YWX"/>
<dbReference type="EMDB" id="EMD-10973"/>
<dbReference type="EMDB" id="EMD-10977"/>
<dbReference type="EMDB" id="EMD-10978"/>
<dbReference type="SMR" id="F5HIJ5"/>
<dbReference type="FunCoup" id="F5HIJ5">
    <property type="interactions" value="255"/>
</dbReference>
<dbReference type="STRING" id="367110.F5HIJ5"/>
<dbReference type="PaxDb" id="5141-EFNCRP00000006892"/>
<dbReference type="EnsemblFungi" id="EAA34304">
    <property type="protein sequence ID" value="EAA34304"/>
    <property type="gene ID" value="NCU06768"/>
</dbReference>
<dbReference type="GeneID" id="3879664"/>
<dbReference type="KEGG" id="ncr:NCU06768"/>
<dbReference type="VEuPathDB" id="FungiDB:NCU06768"/>
<dbReference type="HOGENOM" id="CLU_078858_1_1_1"/>
<dbReference type="InParanoid" id="F5HIJ5"/>
<dbReference type="OMA" id="MPGMYEF"/>
<dbReference type="OrthoDB" id="268521at2759"/>
<dbReference type="Proteomes" id="UP000001805">
    <property type="component" value="Chromosome 6, Linkage Group II"/>
</dbReference>
<dbReference type="GO" id="GO:0005762">
    <property type="term" value="C:mitochondrial large ribosomal subunit"/>
    <property type="evidence" value="ECO:0000318"/>
    <property type="project" value="GO_Central"/>
</dbReference>
<dbReference type="GO" id="GO:0019843">
    <property type="term" value="F:rRNA binding"/>
    <property type="evidence" value="ECO:0000318"/>
    <property type="project" value="GO_Central"/>
</dbReference>
<dbReference type="GO" id="GO:0003735">
    <property type="term" value="F:structural constituent of ribosome"/>
    <property type="evidence" value="ECO:0000318"/>
    <property type="project" value="GO_Central"/>
</dbReference>
<dbReference type="GO" id="GO:0032543">
    <property type="term" value="P:mitochondrial translation"/>
    <property type="evidence" value="ECO:0000318"/>
    <property type="project" value="GO_Central"/>
</dbReference>
<dbReference type="CDD" id="cd01433">
    <property type="entry name" value="Ribosomal_L16_L10e"/>
    <property type="match status" value="1"/>
</dbReference>
<dbReference type="FunFam" id="3.90.1170.10:FF:000003">
    <property type="entry name" value="54S ribosomal protein L16, mitochondrial"/>
    <property type="match status" value="1"/>
</dbReference>
<dbReference type="Gene3D" id="3.90.1170.10">
    <property type="entry name" value="Ribosomal protein L10e/L16"/>
    <property type="match status" value="1"/>
</dbReference>
<dbReference type="InterPro" id="IPR047873">
    <property type="entry name" value="Ribosomal_uL16"/>
</dbReference>
<dbReference type="InterPro" id="IPR000114">
    <property type="entry name" value="Ribosomal_uL16_bact-type"/>
</dbReference>
<dbReference type="InterPro" id="IPR020798">
    <property type="entry name" value="Ribosomal_uL16_CS"/>
</dbReference>
<dbReference type="InterPro" id="IPR016180">
    <property type="entry name" value="Ribosomal_uL16_dom"/>
</dbReference>
<dbReference type="InterPro" id="IPR036920">
    <property type="entry name" value="Ribosomal_uL16_sf"/>
</dbReference>
<dbReference type="NCBIfam" id="TIGR01164">
    <property type="entry name" value="rplP_bact"/>
    <property type="match status" value="1"/>
</dbReference>
<dbReference type="PANTHER" id="PTHR12220">
    <property type="entry name" value="50S/60S RIBOSOMAL PROTEIN L16"/>
    <property type="match status" value="1"/>
</dbReference>
<dbReference type="PANTHER" id="PTHR12220:SF13">
    <property type="entry name" value="LARGE RIBOSOMAL SUBUNIT PROTEIN UL16M"/>
    <property type="match status" value="1"/>
</dbReference>
<dbReference type="Pfam" id="PF00252">
    <property type="entry name" value="Ribosomal_L16"/>
    <property type="match status" value="1"/>
</dbReference>
<dbReference type="PRINTS" id="PR00060">
    <property type="entry name" value="RIBOSOMALL16"/>
</dbReference>
<dbReference type="SUPFAM" id="SSF54686">
    <property type="entry name" value="Ribosomal protein L16p/L10e"/>
    <property type="match status" value="1"/>
</dbReference>
<dbReference type="PROSITE" id="PS00701">
    <property type="entry name" value="RIBOSOMAL_L16_2"/>
    <property type="match status" value="1"/>
</dbReference>
<evidence type="ECO:0000269" key="1">
    <source>
    </source>
</evidence>
<evidence type="ECO:0000303" key="2">
    <source>
    </source>
</evidence>
<evidence type="ECO:0000305" key="3"/>
<evidence type="ECO:0000305" key="4">
    <source>
    </source>
</evidence>
<evidence type="ECO:0007744" key="5">
    <source>
        <dbReference type="PDB" id="6YWS"/>
    </source>
</evidence>
<evidence type="ECO:0007744" key="6">
    <source>
        <dbReference type="PDB" id="6YWV"/>
    </source>
</evidence>
<comment type="function">
    <text evidence="4">Component of the mitochondrial ribosome (mitoribosome), a dedicated translation machinery responsible for the synthesis of mitochondrial genome-encoded proteins, including at least some of the essential transmembrane subunits of the mitochondrial respiratory chain. The mitoribosomes are attached to the mitochondrial inner membrane and translation products are cotranslationally integrated into the membrane.</text>
</comment>
<comment type="subunit">
    <text evidence="1">Component of the mitochondrial large ribosomal subunit (mt-LSU). Mature N.crassa 74S mitochondrial ribosomes consist of a small (37S) and a large (54S) subunit. The 37S small subunit contains a 16S ribosomal RNA (16S mt-rRNA) and 32 different proteins. The 54S large subunit contains a 23S rRNA (23S mt-rRNA) and 42 different proteins.</text>
</comment>
<comment type="subcellular location">
    <subcellularLocation>
        <location evidence="1">Mitochondrion</location>
    </subcellularLocation>
</comment>
<comment type="similarity">
    <text evidence="3">Belongs to the universal ribosomal protein uL16 family.</text>
</comment>
<gene>
    <name type="primary">mrpl16</name>
    <name type="ORF">NCU06768</name>
</gene>
<protein>
    <recommendedName>
        <fullName evidence="2">Large ribosomal subunit protein uL16m</fullName>
    </recommendedName>
</protein>
<sequence length="249" mass="27396">MKHNASSALLSAFQGLRISSSATPFRAASLATSAVRRPIAPTPVSVASHVRLFSATAIQAGSWLEPNLNRKKKMMKGRPRVPTGGSTKGTTVVWGDYGLRMRDHHRRISAQQLKLAEDTIKQRLRGQKYRLYKRVACNVGVYVSGNEMRMGKGKGSFDHWATRVAVNQIIFEIRGQLHEQVIRDAFRLAGHKLPGLYEFVKKGDPPVVGITKLEDGLTVEDLKNPRKKLLMPEITQSAASTSSTAAPPS</sequence>
<name>RM16_NEUCR</name>